<accession>C3MVF7</accession>
<keyword id="KW-0687">Ribonucleoprotein</keyword>
<keyword id="KW-0689">Ribosomal protein</keyword>
<comment type="similarity">
    <text evidence="1">Belongs to the eukaryotic ribosomal protein eL15 family.</text>
</comment>
<evidence type="ECO:0000255" key="1">
    <source>
        <dbReference type="HAMAP-Rule" id="MF_00256"/>
    </source>
</evidence>
<evidence type="ECO:0000256" key="2">
    <source>
        <dbReference type="SAM" id="MobiDB-lite"/>
    </source>
</evidence>
<evidence type="ECO:0000305" key="3"/>
<dbReference type="EMBL" id="CP001400">
    <property type="protein sequence ID" value="ACP38152.1"/>
    <property type="molecule type" value="Genomic_DNA"/>
</dbReference>
<dbReference type="RefSeq" id="WP_012711397.1">
    <property type="nucleotide sequence ID" value="NC_012588.1"/>
</dbReference>
<dbReference type="SMR" id="C3MVF7"/>
<dbReference type="KEGG" id="sia:M1425_1399"/>
<dbReference type="HOGENOM" id="CLU_080796_1_0_2"/>
<dbReference type="Proteomes" id="UP000001350">
    <property type="component" value="Chromosome"/>
</dbReference>
<dbReference type="GO" id="GO:0022625">
    <property type="term" value="C:cytosolic large ribosomal subunit"/>
    <property type="evidence" value="ECO:0007669"/>
    <property type="project" value="TreeGrafter"/>
</dbReference>
<dbReference type="GO" id="GO:0003723">
    <property type="term" value="F:RNA binding"/>
    <property type="evidence" value="ECO:0007669"/>
    <property type="project" value="TreeGrafter"/>
</dbReference>
<dbReference type="GO" id="GO:0003735">
    <property type="term" value="F:structural constituent of ribosome"/>
    <property type="evidence" value="ECO:0007669"/>
    <property type="project" value="InterPro"/>
</dbReference>
<dbReference type="GO" id="GO:0002181">
    <property type="term" value="P:cytoplasmic translation"/>
    <property type="evidence" value="ECO:0007669"/>
    <property type="project" value="TreeGrafter"/>
</dbReference>
<dbReference type="FunFam" id="3.40.1120.10:FF:000002">
    <property type="entry name" value="50S ribosomal protein L15e"/>
    <property type="match status" value="1"/>
</dbReference>
<dbReference type="Gene3D" id="3.40.1120.10">
    <property type="entry name" value="Ribosomal protein l15e"/>
    <property type="match status" value="1"/>
</dbReference>
<dbReference type="HAMAP" id="MF_00256">
    <property type="entry name" value="Ribosomal_eL15"/>
    <property type="match status" value="1"/>
</dbReference>
<dbReference type="InterPro" id="IPR024794">
    <property type="entry name" value="Rbsml_eL15_core_dom_sf"/>
</dbReference>
<dbReference type="InterPro" id="IPR000439">
    <property type="entry name" value="Ribosomal_eL15"/>
</dbReference>
<dbReference type="InterPro" id="IPR020926">
    <property type="entry name" value="Ribosomal_eL15_arc"/>
</dbReference>
<dbReference type="InterPro" id="IPR020925">
    <property type="entry name" value="Ribosomal_eL15_CS"/>
</dbReference>
<dbReference type="InterPro" id="IPR012678">
    <property type="entry name" value="Ribosomal_uL23/eL15/eS24_sf"/>
</dbReference>
<dbReference type="NCBIfam" id="NF003269">
    <property type="entry name" value="PRK04243.1"/>
    <property type="match status" value="1"/>
</dbReference>
<dbReference type="PANTHER" id="PTHR11847:SF4">
    <property type="entry name" value="LARGE RIBOSOMAL SUBUNIT PROTEIN EL15"/>
    <property type="match status" value="1"/>
</dbReference>
<dbReference type="PANTHER" id="PTHR11847">
    <property type="entry name" value="RIBOSOMAL PROTEIN L15"/>
    <property type="match status" value="1"/>
</dbReference>
<dbReference type="Pfam" id="PF00827">
    <property type="entry name" value="Ribosomal_L15e"/>
    <property type="match status" value="1"/>
</dbReference>
<dbReference type="SMART" id="SM01384">
    <property type="entry name" value="Ribosomal_L15e"/>
    <property type="match status" value="1"/>
</dbReference>
<dbReference type="SUPFAM" id="SSF54189">
    <property type="entry name" value="Ribosomal proteins S24e, L23 and L15e"/>
    <property type="match status" value="1"/>
</dbReference>
<dbReference type="PROSITE" id="PS01194">
    <property type="entry name" value="RIBOSOMAL_L15E"/>
    <property type="match status" value="1"/>
</dbReference>
<name>RL15E_SACI4</name>
<gene>
    <name evidence="1" type="primary">rpl15e</name>
    <name type="ordered locus">M1425_1399</name>
</gene>
<protein>
    <recommendedName>
        <fullName evidence="1">Large ribosomal subunit protein eL15</fullName>
    </recommendedName>
    <alternativeName>
        <fullName evidence="3">50S ribosomal protein L15e</fullName>
    </alternativeName>
</protein>
<reference key="1">
    <citation type="journal article" date="2009" name="Proc. Natl. Acad. Sci. U.S.A.">
        <title>Biogeography of the Sulfolobus islandicus pan-genome.</title>
        <authorList>
            <person name="Reno M.L."/>
            <person name="Held N.L."/>
            <person name="Fields C.J."/>
            <person name="Burke P.V."/>
            <person name="Whitaker R.J."/>
        </authorList>
    </citation>
    <scope>NUCLEOTIDE SEQUENCE [LARGE SCALE GENOMIC DNA]</scope>
    <source>
        <strain>M.14.25 / Kamchatka #1</strain>
    </source>
</reference>
<feature type="chain" id="PRO_1000204617" description="Large ribosomal subunit protein eL15">
    <location>
        <begin position="1"/>
        <end position="216"/>
    </location>
</feature>
<feature type="region of interest" description="Disordered" evidence="2">
    <location>
        <begin position="170"/>
        <end position="201"/>
    </location>
</feature>
<feature type="compositionally biased region" description="Basic residues" evidence="2">
    <location>
        <begin position="170"/>
        <end position="188"/>
    </location>
</feature>
<feature type="compositionally biased region" description="Basic and acidic residues" evidence="2">
    <location>
        <begin position="189"/>
        <end position="201"/>
    </location>
</feature>
<proteinExistence type="inferred from homology"/>
<organism>
    <name type="scientific">Saccharolobus islandicus (strain M.14.25 / Kamchatka #1)</name>
    <name type="common">Sulfolobus islandicus</name>
    <dbReference type="NCBI Taxonomy" id="427317"/>
    <lineage>
        <taxon>Archaea</taxon>
        <taxon>Thermoproteota</taxon>
        <taxon>Thermoprotei</taxon>
        <taxon>Sulfolobales</taxon>
        <taxon>Sulfolobaceae</taxon>
        <taxon>Saccharolobus</taxon>
    </lineage>
</organism>
<sequence>MTLSVYHYIENTWNSEEWKKGVLRQRFIEWRKEPSIVRLAKPTRLNRARSLGYKAKQGFVIVRVRVRRGGLNKPRPNKGRRPKRMGVYGYGPAKGYKWIAEERAARKYPNLEVLGSYYVGEDGLYKYYEIIMVDPSHPVIKNDPNYKWLQDPSNRNRVFRGLTSAGKKARGLRKSKGFKGTVKHKWSRKQKEREEKKRHEASKYYRLQRYDKIPGK</sequence>